<protein>
    <recommendedName>
        <fullName evidence="1">Large ribosomal subunit protein bL20</fullName>
    </recommendedName>
    <alternativeName>
        <fullName evidence="2">50S ribosomal protein L20</fullName>
    </alternativeName>
</protein>
<dbReference type="EMBL" id="CP000027">
    <property type="protein sequence ID" value="AAW39980.1"/>
    <property type="molecule type" value="Genomic_DNA"/>
</dbReference>
<dbReference type="RefSeq" id="WP_010936485.1">
    <property type="nucleotide sequence ID" value="NC_002936.3"/>
</dbReference>
<dbReference type="SMR" id="Q3Z8G5"/>
<dbReference type="FunCoup" id="Q3Z8G5">
    <property type="interactions" value="335"/>
</dbReference>
<dbReference type="STRING" id="243164.DET0750"/>
<dbReference type="GeneID" id="3229942"/>
<dbReference type="KEGG" id="det:DET0750"/>
<dbReference type="PATRIC" id="fig|243164.10.peg.716"/>
<dbReference type="eggNOG" id="COG0292">
    <property type="taxonomic scope" value="Bacteria"/>
</dbReference>
<dbReference type="HOGENOM" id="CLU_123265_0_1_0"/>
<dbReference type="InParanoid" id="Q3Z8G5"/>
<dbReference type="Proteomes" id="UP000008289">
    <property type="component" value="Chromosome"/>
</dbReference>
<dbReference type="GO" id="GO:1990904">
    <property type="term" value="C:ribonucleoprotein complex"/>
    <property type="evidence" value="ECO:0007669"/>
    <property type="project" value="UniProtKB-KW"/>
</dbReference>
<dbReference type="GO" id="GO:0005840">
    <property type="term" value="C:ribosome"/>
    <property type="evidence" value="ECO:0007669"/>
    <property type="project" value="UniProtKB-KW"/>
</dbReference>
<dbReference type="GO" id="GO:0019843">
    <property type="term" value="F:rRNA binding"/>
    <property type="evidence" value="ECO:0007669"/>
    <property type="project" value="UniProtKB-UniRule"/>
</dbReference>
<dbReference type="GO" id="GO:0003735">
    <property type="term" value="F:structural constituent of ribosome"/>
    <property type="evidence" value="ECO:0007669"/>
    <property type="project" value="InterPro"/>
</dbReference>
<dbReference type="GO" id="GO:0000027">
    <property type="term" value="P:ribosomal large subunit assembly"/>
    <property type="evidence" value="ECO:0007669"/>
    <property type="project" value="UniProtKB-UniRule"/>
</dbReference>
<dbReference type="GO" id="GO:0006412">
    <property type="term" value="P:translation"/>
    <property type="evidence" value="ECO:0007669"/>
    <property type="project" value="InterPro"/>
</dbReference>
<dbReference type="CDD" id="cd07026">
    <property type="entry name" value="Ribosomal_L20"/>
    <property type="match status" value="1"/>
</dbReference>
<dbReference type="FunFam" id="1.10.1900.20:FF:000001">
    <property type="entry name" value="50S ribosomal protein L20"/>
    <property type="match status" value="1"/>
</dbReference>
<dbReference type="Gene3D" id="6.10.160.10">
    <property type="match status" value="1"/>
</dbReference>
<dbReference type="Gene3D" id="1.10.1900.20">
    <property type="entry name" value="Ribosomal protein L20"/>
    <property type="match status" value="1"/>
</dbReference>
<dbReference type="HAMAP" id="MF_00382">
    <property type="entry name" value="Ribosomal_bL20"/>
    <property type="match status" value="1"/>
</dbReference>
<dbReference type="InterPro" id="IPR005813">
    <property type="entry name" value="Ribosomal_bL20"/>
</dbReference>
<dbReference type="InterPro" id="IPR049946">
    <property type="entry name" value="RIBOSOMAL_L20_CS"/>
</dbReference>
<dbReference type="InterPro" id="IPR035566">
    <property type="entry name" value="Ribosomal_protein_bL20_C"/>
</dbReference>
<dbReference type="NCBIfam" id="TIGR01032">
    <property type="entry name" value="rplT_bact"/>
    <property type="match status" value="1"/>
</dbReference>
<dbReference type="PANTHER" id="PTHR10986">
    <property type="entry name" value="39S RIBOSOMAL PROTEIN L20"/>
    <property type="match status" value="1"/>
</dbReference>
<dbReference type="Pfam" id="PF00453">
    <property type="entry name" value="Ribosomal_L20"/>
    <property type="match status" value="1"/>
</dbReference>
<dbReference type="PRINTS" id="PR00062">
    <property type="entry name" value="RIBOSOMALL20"/>
</dbReference>
<dbReference type="SUPFAM" id="SSF74731">
    <property type="entry name" value="Ribosomal protein L20"/>
    <property type="match status" value="1"/>
</dbReference>
<dbReference type="PROSITE" id="PS00937">
    <property type="entry name" value="RIBOSOMAL_L20"/>
    <property type="match status" value="1"/>
</dbReference>
<accession>Q3Z8G5</accession>
<reference key="1">
    <citation type="journal article" date="2005" name="Science">
        <title>Genome sequence of the PCE-dechlorinating bacterium Dehalococcoides ethenogenes.</title>
        <authorList>
            <person name="Seshadri R."/>
            <person name="Adrian L."/>
            <person name="Fouts D.E."/>
            <person name="Eisen J.A."/>
            <person name="Phillippy A.M."/>
            <person name="Methe B.A."/>
            <person name="Ward N.L."/>
            <person name="Nelson W.C."/>
            <person name="DeBoy R.T."/>
            <person name="Khouri H.M."/>
            <person name="Kolonay J.F."/>
            <person name="Dodson R.J."/>
            <person name="Daugherty S.C."/>
            <person name="Brinkac L.M."/>
            <person name="Sullivan S.A."/>
            <person name="Madupu R."/>
            <person name="Nelson K.E."/>
            <person name="Kang K.H."/>
            <person name="Impraim M."/>
            <person name="Tran K."/>
            <person name="Robinson J.M."/>
            <person name="Forberger H.A."/>
            <person name="Fraser C.M."/>
            <person name="Zinder S.H."/>
            <person name="Heidelberg J.F."/>
        </authorList>
    </citation>
    <scope>NUCLEOTIDE SEQUENCE [LARGE SCALE GENOMIC DNA]</scope>
    <source>
        <strain>ATCC BAA-2266 / KCTC 15142 / 195</strain>
    </source>
</reference>
<proteinExistence type="inferred from homology"/>
<organism>
    <name type="scientific">Dehalococcoides mccartyi (strain ATCC BAA-2266 / KCTC 15142 / 195)</name>
    <name type="common">Dehalococcoides ethenogenes (strain 195)</name>
    <dbReference type="NCBI Taxonomy" id="243164"/>
    <lineage>
        <taxon>Bacteria</taxon>
        <taxon>Bacillati</taxon>
        <taxon>Chloroflexota</taxon>
        <taxon>Dehalococcoidia</taxon>
        <taxon>Dehalococcoidales</taxon>
        <taxon>Dehalococcoidaceae</taxon>
        <taxon>Dehalococcoides</taxon>
    </lineage>
</organism>
<evidence type="ECO:0000255" key="1">
    <source>
        <dbReference type="HAMAP-Rule" id="MF_00382"/>
    </source>
</evidence>
<evidence type="ECO:0000305" key="2"/>
<name>RL20_DEHM1</name>
<feature type="chain" id="PRO_0000243675" description="Large ribosomal subunit protein bL20">
    <location>
        <begin position="1"/>
        <end position="119"/>
    </location>
</feature>
<sequence length="119" mass="12863">MARIKGGIATHKRHKKVLALTKGHASARHSLFKRAHESMVHAMSYAFAHRRARKGDMRRLWITRINAAARAEGLTYGELMSGLKTAGIDINRKVLADMAVSDSVAFAAVAAKAAAAKAN</sequence>
<keyword id="KW-0687">Ribonucleoprotein</keyword>
<keyword id="KW-0689">Ribosomal protein</keyword>
<keyword id="KW-0694">RNA-binding</keyword>
<keyword id="KW-0699">rRNA-binding</keyword>
<comment type="function">
    <text evidence="1">Binds directly to 23S ribosomal RNA and is necessary for the in vitro assembly process of the 50S ribosomal subunit. It is not involved in the protein synthesizing functions of that subunit.</text>
</comment>
<comment type="similarity">
    <text evidence="1">Belongs to the bacterial ribosomal protein bL20 family.</text>
</comment>
<gene>
    <name evidence="1" type="primary">rplT</name>
    <name type="ordered locus">DET0750</name>
</gene>